<proteinExistence type="inferred from homology"/>
<comment type="function">
    <text>NodD regulates the expression of the nodABCFE genes which encode other nodulation proteins. NodD is also a negative regulator of its own expression. Binds flavonoids as inducers.</text>
</comment>
<comment type="miscellaneous">
    <text>There are at least two nodD genes in B.elkanii.</text>
</comment>
<comment type="similarity">
    <text evidence="2">Belongs to the LysR transcriptional regulatory family.</text>
</comment>
<dbReference type="EMBL" id="U04609">
    <property type="protein sequence ID" value="AAA63597.1"/>
    <property type="molecule type" value="Genomic_DNA"/>
</dbReference>
<dbReference type="RefSeq" id="WP_016848463.1">
    <property type="nucleotide sequence ID" value="NZ_BJNL01000082.1"/>
</dbReference>
<dbReference type="SMR" id="P50324"/>
<dbReference type="GeneID" id="92956827"/>
<dbReference type="GO" id="GO:0003677">
    <property type="term" value="F:DNA binding"/>
    <property type="evidence" value="ECO:0007669"/>
    <property type="project" value="UniProtKB-KW"/>
</dbReference>
<dbReference type="GO" id="GO:0003700">
    <property type="term" value="F:DNA-binding transcription factor activity"/>
    <property type="evidence" value="ECO:0007669"/>
    <property type="project" value="InterPro"/>
</dbReference>
<dbReference type="CDD" id="cd08462">
    <property type="entry name" value="PBP2_NodD"/>
    <property type="match status" value="1"/>
</dbReference>
<dbReference type="Gene3D" id="3.40.190.10">
    <property type="entry name" value="Periplasmic binding protein-like II"/>
    <property type="match status" value="2"/>
</dbReference>
<dbReference type="Gene3D" id="1.10.10.10">
    <property type="entry name" value="Winged helix-like DNA-binding domain superfamily/Winged helix DNA-binding domain"/>
    <property type="match status" value="1"/>
</dbReference>
<dbReference type="InterPro" id="IPR050389">
    <property type="entry name" value="LysR-type_TF"/>
</dbReference>
<dbReference type="InterPro" id="IPR005119">
    <property type="entry name" value="LysR_subst-bd"/>
</dbReference>
<dbReference type="InterPro" id="IPR037416">
    <property type="entry name" value="NodD_PBP2"/>
</dbReference>
<dbReference type="InterPro" id="IPR000847">
    <property type="entry name" value="Tscrpt_reg_HTH_LysR"/>
</dbReference>
<dbReference type="InterPro" id="IPR036388">
    <property type="entry name" value="WH-like_DNA-bd_sf"/>
</dbReference>
<dbReference type="InterPro" id="IPR036390">
    <property type="entry name" value="WH_DNA-bd_sf"/>
</dbReference>
<dbReference type="PANTHER" id="PTHR30118:SF6">
    <property type="entry name" value="HTH-TYPE TRANSCRIPTIONAL REGULATOR LEUO"/>
    <property type="match status" value="1"/>
</dbReference>
<dbReference type="PANTHER" id="PTHR30118">
    <property type="entry name" value="HTH-TYPE TRANSCRIPTIONAL REGULATOR LEUO-RELATED"/>
    <property type="match status" value="1"/>
</dbReference>
<dbReference type="Pfam" id="PF00126">
    <property type="entry name" value="HTH_1"/>
    <property type="match status" value="1"/>
</dbReference>
<dbReference type="Pfam" id="PF03466">
    <property type="entry name" value="LysR_substrate"/>
    <property type="match status" value="1"/>
</dbReference>
<dbReference type="PRINTS" id="PR00039">
    <property type="entry name" value="HTHLYSR"/>
</dbReference>
<dbReference type="SUPFAM" id="SSF53850">
    <property type="entry name" value="Periplasmic binding protein-like II"/>
    <property type="match status" value="1"/>
</dbReference>
<dbReference type="SUPFAM" id="SSF46785">
    <property type="entry name" value="Winged helix' DNA-binding domain"/>
    <property type="match status" value="1"/>
</dbReference>
<dbReference type="PROSITE" id="PS50931">
    <property type="entry name" value="HTH_LYSR"/>
    <property type="match status" value="1"/>
</dbReference>
<reference key="1">
    <citation type="journal article" date="1994" name="Mol. Plant Microbe Interact.">
        <title>DNA sequence of the common nodulation genes of Bradyrhizobium elkanii and their phylogenetic relationship to those of other nodulating bacteria.</title>
        <authorList>
            <person name="Dobert R.C."/>
            <person name="Breil B.T."/>
            <person name="Triplett E.W."/>
        </authorList>
    </citation>
    <scope>NUCLEOTIDE SEQUENCE [GENOMIC DNA]</scope>
    <source>
        <strain>USDA 94</strain>
    </source>
</reference>
<name>NODD2_BRAEL</name>
<keyword id="KW-0010">Activator</keyword>
<keyword id="KW-0238">DNA-binding</keyword>
<keyword id="KW-0536">Nodulation</keyword>
<keyword id="KW-0678">Repressor</keyword>
<keyword id="KW-0804">Transcription</keyword>
<keyword id="KW-0805">Transcription regulation</keyword>
<gene>
    <name type="primary">nodD2</name>
</gene>
<feature type="chain" id="PRO_0000105702" description="Nodulation protein D 2">
    <location>
        <begin position="1"/>
        <end position="331"/>
    </location>
</feature>
<feature type="domain" description="HTH lysR-type" evidence="1">
    <location>
        <begin position="6"/>
        <end position="63"/>
    </location>
</feature>
<feature type="DNA-binding region" description="H-T-H motif" evidence="1">
    <location>
        <begin position="23"/>
        <end position="42"/>
    </location>
</feature>
<sequence>MRFNGLDLNLLVALDALMTERSLTAAARKINLSQPAMSAAVARLRSYFRDELFAMRGRKLVPTSRAEGLAAPVREALMHIELSIIARDAFDPAQSNRRFRIGLCDFITIVFFRHVAERVAREAPAVSFELVALADEHDELLRRGELDFIILPEPFMSSAHPRIALFEERLVCVGCGTNGELRRRLTFDRYMTMGHVAVKLGVARMPPIEESFLLDRGLNRRIDILVHSYGMIPPMLMGTSRIGTMPLRLVKHFETTMPLRIAELPRPFPTFTEAVQWPVLQNSDPESIWMREILLQEAARMTSTSDDCSMSYASEQADTEGRLTSVASRLS</sequence>
<evidence type="ECO:0000255" key="1">
    <source>
        <dbReference type="PROSITE-ProRule" id="PRU00253"/>
    </source>
</evidence>
<evidence type="ECO:0000305" key="2"/>
<protein>
    <recommendedName>
        <fullName>Nodulation protein D 2</fullName>
    </recommendedName>
</protein>
<accession>P50324</accession>
<organism>
    <name type="scientific">Bradyrhizobium elkanii</name>
    <dbReference type="NCBI Taxonomy" id="29448"/>
    <lineage>
        <taxon>Bacteria</taxon>
        <taxon>Pseudomonadati</taxon>
        <taxon>Pseudomonadota</taxon>
        <taxon>Alphaproteobacteria</taxon>
        <taxon>Hyphomicrobiales</taxon>
        <taxon>Nitrobacteraceae</taxon>
        <taxon>Bradyrhizobium</taxon>
    </lineage>
</organism>